<dbReference type="EC" id="3.1.4.12"/>
<dbReference type="EMBL" id="FO081096">
    <property type="protein sequence ID" value="CCD69084.1"/>
    <property type="molecule type" value="Genomic_DNA"/>
</dbReference>
<dbReference type="PIR" id="T34001">
    <property type="entry name" value="T34001"/>
</dbReference>
<dbReference type="RefSeq" id="NP_001040996.1">
    <property type="nucleotide sequence ID" value="NM_001047531.2"/>
</dbReference>
<dbReference type="SMR" id="Q9UAY4"/>
<dbReference type="FunCoup" id="Q9UAY4">
    <property type="interactions" value="135"/>
</dbReference>
<dbReference type="STRING" id="6239.W03G1.7a.1"/>
<dbReference type="GlyCosmos" id="Q9UAY4">
    <property type="glycosylation" value="4 sites, No reported glycans"/>
</dbReference>
<dbReference type="PaxDb" id="6239-W03G1.7a"/>
<dbReference type="PeptideAtlas" id="Q9UAY4"/>
<dbReference type="EnsemblMetazoa" id="W03G1.7a.1">
    <property type="protein sequence ID" value="W03G1.7a.1"/>
    <property type="gene ID" value="WBGene00000213"/>
</dbReference>
<dbReference type="GeneID" id="176879"/>
<dbReference type="KEGG" id="cel:CELE_W03G1.7"/>
<dbReference type="UCSC" id="W03G1.7b">
    <property type="organism name" value="c. elegans"/>
</dbReference>
<dbReference type="AGR" id="WB:WBGene00000213"/>
<dbReference type="CTD" id="176879"/>
<dbReference type="WormBase" id="W03G1.7a">
    <property type="protein sequence ID" value="CE31626"/>
    <property type="gene ID" value="WBGene00000213"/>
    <property type="gene designation" value="asm-3"/>
</dbReference>
<dbReference type="eggNOG" id="KOG3770">
    <property type="taxonomic scope" value="Eukaryota"/>
</dbReference>
<dbReference type="GeneTree" id="ENSGT00950000183182"/>
<dbReference type="HOGENOM" id="CLU_014743_3_0_1"/>
<dbReference type="InParanoid" id="Q9UAY4"/>
<dbReference type="OMA" id="CYMKKIY"/>
<dbReference type="OrthoDB" id="282973at2759"/>
<dbReference type="PhylomeDB" id="Q9UAY4"/>
<dbReference type="UniPathway" id="UPA00222"/>
<dbReference type="PRO" id="PR:Q9UAY4"/>
<dbReference type="Proteomes" id="UP000001940">
    <property type="component" value="Chromosome IV"/>
</dbReference>
<dbReference type="Bgee" id="WBGene00000213">
    <property type="expression patterns" value="Expressed in adult organism and 1 other cell type or tissue"/>
</dbReference>
<dbReference type="ExpressionAtlas" id="Q9UAY4">
    <property type="expression patterns" value="differential"/>
</dbReference>
<dbReference type="GO" id="GO:0005576">
    <property type="term" value="C:extracellular region"/>
    <property type="evidence" value="ECO:0000250"/>
    <property type="project" value="UniProtKB"/>
</dbReference>
<dbReference type="GO" id="GO:0005615">
    <property type="term" value="C:extracellular space"/>
    <property type="evidence" value="ECO:0000318"/>
    <property type="project" value="GO_Central"/>
</dbReference>
<dbReference type="GO" id="GO:0005764">
    <property type="term" value="C:lysosome"/>
    <property type="evidence" value="ECO:0000318"/>
    <property type="project" value="GO_Central"/>
</dbReference>
<dbReference type="GO" id="GO:0016020">
    <property type="term" value="C:membrane"/>
    <property type="evidence" value="ECO:0007669"/>
    <property type="project" value="GOC"/>
</dbReference>
<dbReference type="GO" id="GO:0061750">
    <property type="term" value="F:acid sphingomyelin phosphodiesterase activity"/>
    <property type="evidence" value="ECO:0000318"/>
    <property type="project" value="GO_Central"/>
</dbReference>
<dbReference type="GO" id="GO:0016798">
    <property type="term" value="F:hydrolase activity, acting on glycosyl bonds"/>
    <property type="evidence" value="ECO:0007669"/>
    <property type="project" value="UniProtKB-KW"/>
</dbReference>
<dbReference type="GO" id="GO:0046872">
    <property type="term" value="F:metal ion binding"/>
    <property type="evidence" value="ECO:0007669"/>
    <property type="project" value="UniProtKB-KW"/>
</dbReference>
<dbReference type="GO" id="GO:0004767">
    <property type="term" value="F:sphingomyelin phosphodiesterase activity"/>
    <property type="evidence" value="ECO:0000250"/>
    <property type="project" value="UniProtKB"/>
</dbReference>
<dbReference type="GO" id="GO:0046513">
    <property type="term" value="P:ceramide biosynthetic process"/>
    <property type="evidence" value="ECO:0000250"/>
    <property type="project" value="UniProtKB"/>
</dbReference>
<dbReference type="GO" id="GO:1905691">
    <property type="term" value="P:lipid droplet disassembly"/>
    <property type="evidence" value="ECO:0000315"/>
    <property type="project" value="UniProtKB"/>
</dbReference>
<dbReference type="GO" id="GO:0006685">
    <property type="term" value="P:sphingomyelin catabolic process"/>
    <property type="evidence" value="ECO:0000250"/>
    <property type="project" value="UniProtKB"/>
</dbReference>
<dbReference type="CDD" id="cd00842">
    <property type="entry name" value="MPP_ASMase"/>
    <property type="match status" value="1"/>
</dbReference>
<dbReference type="Gene3D" id="3.60.21.10">
    <property type="match status" value="1"/>
</dbReference>
<dbReference type="Gene3D" id="1.10.225.10">
    <property type="entry name" value="Saposin-like"/>
    <property type="match status" value="1"/>
</dbReference>
<dbReference type="InterPro" id="IPR041805">
    <property type="entry name" value="ASMase/PPN1_MPP"/>
</dbReference>
<dbReference type="InterPro" id="IPR004843">
    <property type="entry name" value="Calcineurin-like_PHP_ApaH"/>
</dbReference>
<dbReference type="InterPro" id="IPR029052">
    <property type="entry name" value="Metallo-depent_PP-like"/>
</dbReference>
<dbReference type="InterPro" id="IPR011001">
    <property type="entry name" value="Saposin-like"/>
</dbReference>
<dbReference type="InterPro" id="IPR008139">
    <property type="entry name" value="SaposinB_dom"/>
</dbReference>
<dbReference type="InterPro" id="IPR011160">
    <property type="entry name" value="Sphingomy_PDE"/>
</dbReference>
<dbReference type="PANTHER" id="PTHR10340">
    <property type="entry name" value="SPHINGOMYELIN PHOSPHODIESTERASE"/>
    <property type="match status" value="1"/>
</dbReference>
<dbReference type="PANTHER" id="PTHR10340:SF31">
    <property type="entry name" value="SPHINGOMYELIN PHOSPHODIESTERASE ASM-3-RELATED"/>
    <property type="match status" value="1"/>
</dbReference>
<dbReference type="Pfam" id="PF00149">
    <property type="entry name" value="Metallophos"/>
    <property type="match status" value="1"/>
</dbReference>
<dbReference type="PIRSF" id="PIRSF000948">
    <property type="entry name" value="Sphingomy_PDE"/>
    <property type="match status" value="1"/>
</dbReference>
<dbReference type="SMART" id="SM00741">
    <property type="entry name" value="SapB"/>
    <property type="match status" value="1"/>
</dbReference>
<dbReference type="SUPFAM" id="SSF56300">
    <property type="entry name" value="Metallo-dependent phosphatases"/>
    <property type="match status" value="1"/>
</dbReference>
<dbReference type="SUPFAM" id="SSF47862">
    <property type="entry name" value="Saposin"/>
    <property type="match status" value="1"/>
</dbReference>
<dbReference type="PROSITE" id="PS50015">
    <property type="entry name" value="SAP_B"/>
    <property type="match status" value="1"/>
</dbReference>
<gene>
    <name type="primary">asm-3</name>
    <name type="ORF">W03G1.7</name>
</gene>
<accession>Q9UAY4</accession>
<sequence>MLLGLLVLSLAFQGTLAVTECEECKSIVDLLQFEWGEKKTEECVMEIAVFICETFHIEDNDVCNFIISDFSDEFMYVIKQILVTPHQLCGLLMKNDCGDFVDPLATIWNMTIPGNQPPFVPKQVVPPGNPTLRALHLTDLHVDMFYTVGLEADCGTPQCCRPQDMNVEIVENGDVKQPAGPWGSVGSCDTPYWLLTNMLQNIASTAGKLDYIMVSGDLVSHTVWAYTPETHSFMVKNLSDTIRSYFPKTPVYFAVGNHEGVPVDNIAPHFTPKKYHMDWLYKAMSNAWQGWIPADQEKSLEYNGCYMKKIYDGLRMISLNNVYGDRINFWLYINQTDPDGTLQWLINQLQDAENVGDKVHIVAHIPGSDGEALEGYALNYYKIINRYANTVVGQFFGHTHSEKFYMMYANPDDYKSTPTNVVYSAPSVTPYSDYFPAYRIYTIDGVHKGSTYQVIDYEEWFFNLTSNNANPTNVKWEVLYQSANMEYGLKGQIPTEYNQMIERMKTDDSLFNKYYENHNRRSIYDGRAPCNDQQCRNGYLCDARQFHQTQQLCTDLEGGIQKPEPKKNKYSARFATSNERRRGKEECKI</sequence>
<protein>
    <recommendedName>
        <fullName>Putative sphingomyelin phosphodiesterase asm-3</fullName>
        <ecNumber>3.1.4.12</ecNumber>
    </recommendedName>
</protein>
<evidence type="ECO:0000250" key="1">
    <source>
        <dbReference type="UniProtKB" id="P17405"/>
    </source>
</evidence>
<evidence type="ECO:0000250" key="2">
    <source>
        <dbReference type="UniProtKB" id="Q10916"/>
    </source>
</evidence>
<evidence type="ECO:0000250" key="3">
    <source>
        <dbReference type="UniProtKB" id="Q92484"/>
    </source>
</evidence>
<evidence type="ECO:0000255" key="4"/>
<evidence type="ECO:0000255" key="5">
    <source>
        <dbReference type="PROSITE-ProRule" id="PRU00415"/>
    </source>
</evidence>
<evidence type="ECO:0000256" key="6">
    <source>
        <dbReference type="SAM" id="MobiDB-lite"/>
    </source>
</evidence>
<evidence type="ECO:0000269" key="7">
    <source>
    </source>
</evidence>
<evidence type="ECO:0000305" key="8"/>
<feature type="signal peptide" evidence="4">
    <location>
        <begin position="1"/>
        <end position="17"/>
    </location>
</feature>
<feature type="chain" id="PRO_0000002327" description="Putative sphingomyelin phosphodiesterase asm-3">
    <location>
        <begin position="18"/>
        <end position="589"/>
    </location>
</feature>
<feature type="domain" description="Saposin B-type" evidence="5">
    <location>
        <begin position="18"/>
        <end position="101"/>
    </location>
</feature>
<feature type="region of interest" description="Disordered" evidence="6">
    <location>
        <begin position="562"/>
        <end position="589"/>
    </location>
</feature>
<feature type="compositionally biased region" description="Basic and acidic residues" evidence="6">
    <location>
        <begin position="578"/>
        <end position="589"/>
    </location>
</feature>
<feature type="binding site" evidence="1">
    <location>
        <position position="139"/>
    </location>
    <ligand>
        <name>Zn(2+)</name>
        <dbReference type="ChEBI" id="CHEBI:29105"/>
        <label>1</label>
    </ligand>
</feature>
<feature type="binding site" evidence="1">
    <location>
        <position position="141"/>
    </location>
    <ligand>
        <name>Zn(2+)</name>
        <dbReference type="ChEBI" id="CHEBI:29105"/>
        <label>1</label>
    </ligand>
</feature>
<feature type="binding site" evidence="1">
    <location>
        <position position="217"/>
    </location>
    <ligand>
        <name>Zn(2+)</name>
        <dbReference type="ChEBI" id="CHEBI:29105"/>
        <label>1</label>
    </ligand>
</feature>
<feature type="binding site" evidence="1">
    <location>
        <position position="217"/>
    </location>
    <ligand>
        <name>Zn(2+)</name>
        <dbReference type="ChEBI" id="CHEBI:29105"/>
        <label>2</label>
    </ligand>
</feature>
<feature type="binding site" evidence="1">
    <location>
        <position position="257"/>
    </location>
    <ligand>
        <name>Zn(2+)</name>
        <dbReference type="ChEBI" id="CHEBI:29105"/>
        <label>2</label>
    </ligand>
</feature>
<feature type="binding site" evidence="1">
    <location>
        <position position="364"/>
    </location>
    <ligand>
        <name>Zn(2+)</name>
        <dbReference type="ChEBI" id="CHEBI:29105"/>
        <label>2</label>
    </ligand>
</feature>
<feature type="binding site" evidence="1">
    <location>
        <position position="398"/>
    </location>
    <ligand>
        <name>Zn(2+)</name>
        <dbReference type="ChEBI" id="CHEBI:29105"/>
        <label>2</label>
    </ligand>
</feature>
<feature type="binding site" evidence="1">
    <location>
        <position position="400"/>
    </location>
    <ligand>
        <name>Zn(2+)</name>
        <dbReference type="ChEBI" id="CHEBI:29105"/>
        <label>1</label>
    </ligand>
</feature>
<feature type="glycosylation site" description="N-linked (GlcNAc...) asparagine" evidence="5">
    <location>
        <position position="109"/>
    </location>
</feature>
<feature type="glycosylation site" description="N-linked (GlcNAc...) asparagine" evidence="5">
    <location>
        <position position="237"/>
    </location>
</feature>
<feature type="glycosylation site" description="N-linked (GlcNAc...) asparagine" evidence="5">
    <location>
        <position position="334"/>
    </location>
</feature>
<feature type="glycosylation site" description="N-linked (GlcNAc...) asparagine" evidence="5">
    <location>
        <position position="463"/>
    </location>
</feature>
<feature type="disulfide bond" evidence="5">
    <location>
        <begin position="21"/>
        <end position="97"/>
    </location>
</feature>
<feature type="disulfide bond" evidence="5">
    <location>
        <begin position="24"/>
        <end position="89"/>
    </location>
</feature>
<feature type="disulfide bond" evidence="5">
    <location>
        <begin position="52"/>
        <end position="63"/>
    </location>
</feature>
<feature type="disulfide bond" evidence="5">
    <location>
        <begin position="154"/>
        <end position="159"/>
    </location>
</feature>
<feature type="disulfide bond" evidence="5">
    <location>
        <begin position="160"/>
        <end position="188"/>
    </location>
</feature>
<feature type="disulfide bond" evidence="5">
    <location>
        <begin position="530"/>
        <end position="535"/>
    </location>
</feature>
<feature type="disulfide bond" evidence="5">
    <location>
        <begin position="541"/>
        <end position="553"/>
    </location>
</feature>
<name>ASM3_CAEEL</name>
<keyword id="KW-1015">Disulfide bond</keyword>
<keyword id="KW-0325">Glycoprotein</keyword>
<keyword id="KW-0326">Glycosidase</keyword>
<keyword id="KW-0378">Hydrolase</keyword>
<keyword id="KW-0443">Lipid metabolism</keyword>
<keyword id="KW-0479">Metal-binding</keyword>
<keyword id="KW-1185">Reference proteome</keyword>
<keyword id="KW-0964">Secreted</keyword>
<keyword id="KW-0732">Signal</keyword>
<keyword id="KW-0746">Sphingolipid metabolism</keyword>
<keyword id="KW-0862">Zinc</keyword>
<reference key="1">
    <citation type="journal article" date="1998" name="Science">
        <title>Genome sequence of the nematode C. elegans: a platform for investigating biology.</title>
        <authorList>
            <consortium name="The C. elegans sequencing consortium"/>
        </authorList>
    </citation>
    <scope>NUCLEOTIDE SEQUENCE [LARGE SCALE GENOMIC DNA]</scope>
    <source>
        <strain>Bristol N2</strain>
    </source>
</reference>
<reference key="2">
    <citation type="journal article" date="2017" name="Chem. Sci.">
        <title>Structure and conserved function of iso-branched sphingoid bases from the nematode Caenorhabditis elegans.</title>
        <authorList>
            <person name="Hannich J.T."/>
            <person name="Mellal D."/>
            <person name="Feng S."/>
            <person name="Zumbuehl A."/>
            <person name="Riezman H."/>
        </authorList>
    </citation>
    <scope>FUNCTION</scope>
</reference>
<proteinExistence type="inferred from homology"/>
<comment type="function">
    <text evidence="2 7">Converts sphingomyelin to ceramide (N-acyl-sphingoid base) and phosphocholine (By similarity). C.elegans contain specific sphingoid bases, which are unique or different in structure compared to the sphingoid bases found in other animals. Two examples of these distinctive compounds are: 15-methylhexadecasphinganine and 15-methylhexadecasphing-4-enine (PubMed:30155209).</text>
</comment>
<comment type="catalytic activity">
    <reaction evidence="8">
        <text>an N-(acyl)-sphingosylphosphocholine + H2O = an N-acyl-sphingoid base + phosphocholine + H(+)</text>
        <dbReference type="Rhea" id="RHEA:45300"/>
        <dbReference type="ChEBI" id="CHEBI:15377"/>
        <dbReference type="ChEBI" id="CHEBI:15378"/>
        <dbReference type="ChEBI" id="CHEBI:64583"/>
        <dbReference type="ChEBI" id="CHEBI:83273"/>
        <dbReference type="ChEBI" id="CHEBI:295975"/>
    </reaction>
    <physiologicalReaction direction="left-to-right" evidence="8">
        <dbReference type="Rhea" id="RHEA:45301"/>
    </physiologicalReaction>
</comment>
<comment type="catalytic activity">
    <reaction evidence="2">
        <text>a sphingomyelin + H2O = phosphocholine + an N-acylsphing-4-enine + H(+)</text>
        <dbReference type="Rhea" id="RHEA:19253"/>
        <dbReference type="ChEBI" id="CHEBI:15377"/>
        <dbReference type="ChEBI" id="CHEBI:15378"/>
        <dbReference type="ChEBI" id="CHEBI:17636"/>
        <dbReference type="ChEBI" id="CHEBI:52639"/>
        <dbReference type="ChEBI" id="CHEBI:295975"/>
        <dbReference type="EC" id="3.1.4.12"/>
    </reaction>
    <physiologicalReaction direction="left-to-right" evidence="2">
        <dbReference type="Rhea" id="RHEA:19254"/>
    </physiologicalReaction>
</comment>
<comment type="catalytic activity">
    <reaction evidence="8">
        <text>an N-acyl-15-methylhexadecasphing-4-enine-1-phosphocholine + H2O = an N-acyl-15-methylhexadecasphing-4-enine + phosphocholine + H(+)</text>
        <dbReference type="Rhea" id="RHEA:34739"/>
        <dbReference type="ChEBI" id="CHEBI:15377"/>
        <dbReference type="ChEBI" id="CHEBI:15378"/>
        <dbReference type="ChEBI" id="CHEBI:70775"/>
        <dbReference type="ChEBI" id="CHEBI:70846"/>
        <dbReference type="ChEBI" id="CHEBI:295975"/>
    </reaction>
    <physiologicalReaction direction="left-to-right" evidence="8">
        <dbReference type="Rhea" id="RHEA:34740"/>
    </physiologicalReaction>
</comment>
<comment type="cofactor">
    <cofactor evidence="3">
        <name>Zn(2+)</name>
        <dbReference type="ChEBI" id="CHEBI:29105"/>
    </cofactor>
    <text evidence="3">Binds 2 Zn(2+) per subunit.</text>
</comment>
<comment type="pathway">
    <text>Lipid metabolism; sphingolipid metabolism.</text>
</comment>
<comment type="subcellular location">
    <subcellularLocation>
        <location evidence="2">Secreted</location>
    </subcellularLocation>
</comment>
<comment type="miscellaneous">
    <text evidence="1 2">There are two types of sphingomyelinases: asm (acid), and nsm (neutral). Only acid sphingomyelinase has been found in worms.</text>
</comment>
<comment type="similarity">
    <text evidence="8">Belongs to the acid sphingomyelinase family.</text>
</comment>
<organism>
    <name type="scientific">Caenorhabditis elegans</name>
    <dbReference type="NCBI Taxonomy" id="6239"/>
    <lineage>
        <taxon>Eukaryota</taxon>
        <taxon>Metazoa</taxon>
        <taxon>Ecdysozoa</taxon>
        <taxon>Nematoda</taxon>
        <taxon>Chromadorea</taxon>
        <taxon>Rhabditida</taxon>
        <taxon>Rhabditina</taxon>
        <taxon>Rhabditomorpha</taxon>
        <taxon>Rhabditoidea</taxon>
        <taxon>Rhabditidae</taxon>
        <taxon>Peloderinae</taxon>
        <taxon>Caenorhabditis</taxon>
    </lineage>
</organism>